<feature type="chain" id="PRO_0000106231" description="Valine--tRNA ligase">
    <location>
        <begin position="1"/>
        <end position="838"/>
    </location>
</feature>
<feature type="coiled-coil region" evidence="1">
    <location>
        <begin position="768"/>
        <end position="838"/>
    </location>
</feature>
<feature type="short sequence motif" description="'HIGH' region">
    <location>
        <begin position="46"/>
        <end position="56"/>
    </location>
</feature>
<feature type="short sequence motif" description="'KMSKS' region">
    <location>
        <begin position="514"/>
        <end position="518"/>
    </location>
</feature>
<feature type="binding site" evidence="1">
    <location>
        <position position="517"/>
    </location>
    <ligand>
        <name>ATP</name>
        <dbReference type="ChEBI" id="CHEBI:30616"/>
    </ligand>
</feature>
<comment type="function">
    <text evidence="1">Catalyzes the attachment of valine to tRNA(Val). As ValRS can inadvertently accommodate and process structurally similar amino acids such as threonine, to avoid such errors, it has a 'posttransfer' editing activity that hydrolyzes mischarged Thr-tRNA(Val) in a tRNA-dependent manner.</text>
</comment>
<comment type="catalytic activity">
    <reaction evidence="1">
        <text>tRNA(Val) + L-valine + ATP = L-valyl-tRNA(Val) + AMP + diphosphate</text>
        <dbReference type="Rhea" id="RHEA:10704"/>
        <dbReference type="Rhea" id="RHEA-COMP:9672"/>
        <dbReference type="Rhea" id="RHEA-COMP:9708"/>
        <dbReference type="ChEBI" id="CHEBI:30616"/>
        <dbReference type="ChEBI" id="CHEBI:33019"/>
        <dbReference type="ChEBI" id="CHEBI:57762"/>
        <dbReference type="ChEBI" id="CHEBI:78442"/>
        <dbReference type="ChEBI" id="CHEBI:78537"/>
        <dbReference type="ChEBI" id="CHEBI:456215"/>
        <dbReference type="EC" id="6.1.1.9"/>
    </reaction>
</comment>
<comment type="subunit">
    <text evidence="1">Monomer.</text>
</comment>
<comment type="subcellular location">
    <subcellularLocation>
        <location evidence="1">Cytoplasm</location>
    </subcellularLocation>
</comment>
<comment type="domain">
    <text evidence="1">ValRS has two distinct active sites: one for aminoacylation and one for editing. The misactivated threonine is translocated from the active site to the editing site.</text>
</comment>
<comment type="domain">
    <text evidence="1">The C-terminal coiled-coil domain is crucial for aminoacylation activity.</text>
</comment>
<comment type="similarity">
    <text evidence="1">Belongs to the class-I aminoacyl-tRNA synthetase family. ValS type 1 subfamily.</text>
</comment>
<protein>
    <recommendedName>
        <fullName evidence="1">Valine--tRNA ligase</fullName>
        <ecNumber evidence="1">6.1.1.9</ecNumber>
    </recommendedName>
    <alternativeName>
        <fullName evidence="1">Valyl-tRNA synthetase</fullName>
        <shortName evidence="1">ValRS</shortName>
    </alternativeName>
</protein>
<dbReference type="EC" id="6.1.1.9" evidence="1"/>
<dbReference type="EMBL" id="U00089">
    <property type="protein sequence ID" value="AAB96009.1"/>
    <property type="molecule type" value="Genomic_DNA"/>
</dbReference>
<dbReference type="PIR" id="S73687">
    <property type="entry name" value="S73687"/>
</dbReference>
<dbReference type="RefSeq" id="NP_110168.1">
    <property type="nucleotide sequence ID" value="NC_000912.1"/>
</dbReference>
<dbReference type="RefSeq" id="WP_010874836.1">
    <property type="nucleotide sequence ID" value="NZ_OU342337.1"/>
</dbReference>
<dbReference type="SMR" id="P75304"/>
<dbReference type="IntAct" id="P75304">
    <property type="interactions" value="1"/>
</dbReference>
<dbReference type="STRING" id="272634.MPN_480"/>
<dbReference type="EnsemblBacteria" id="AAB96009">
    <property type="protein sequence ID" value="AAB96009"/>
    <property type="gene ID" value="MPN_480"/>
</dbReference>
<dbReference type="KEGG" id="mpn:MPN_480"/>
<dbReference type="PATRIC" id="fig|272634.6.peg.519"/>
<dbReference type="HOGENOM" id="CLU_001493_0_2_14"/>
<dbReference type="OrthoDB" id="9810365at2"/>
<dbReference type="BioCyc" id="MPNE272634:G1GJ3-786-MONOMER"/>
<dbReference type="Proteomes" id="UP000000808">
    <property type="component" value="Chromosome"/>
</dbReference>
<dbReference type="GO" id="GO:0005829">
    <property type="term" value="C:cytosol"/>
    <property type="evidence" value="ECO:0007669"/>
    <property type="project" value="TreeGrafter"/>
</dbReference>
<dbReference type="GO" id="GO:0002161">
    <property type="term" value="F:aminoacyl-tRNA deacylase activity"/>
    <property type="evidence" value="ECO:0007669"/>
    <property type="project" value="InterPro"/>
</dbReference>
<dbReference type="GO" id="GO:0005524">
    <property type="term" value="F:ATP binding"/>
    <property type="evidence" value="ECO:0007669"/>
    <property type="project" value="UniProtKB-UniRule"/>
</dbReference>
<dbReference type="GO" id="GO:0004832">
    <property type="term" value="F:valine-tRNA ligase activity"/>
    <property type="evidence" value="ECO:0007669"/>
    <property type="project" value="UniProtKB-UniRule"/>
</dbReference>
<dbReference type="GO" id="GO:0006438">
    <property type="term" value="P:valyl-tRNA aminoacylation"/>
    <property type="evidence" value="ECO:0007669"/>
    <property type="project" value="UniProtKB-UniRule"/>
</dbReference>
<dbReference type="CDD" id="cd07962">
    <property type="entry name" value="Anticodon_Ia_Val"/>
    <property type="match status" value="1"/>
</dbReference>
<dbReference type="CDD" id="cd00817">
    <property type="entry name" value="ValRS_core"/>
    <property type="match status" value="1"/>
</dbReference>
<dbReference type="Gene3D" id="2.170.220.10">
    <property type="match status" value="1"/>
</dbReference>
<dbReference type="Gene3D" id="3.40.50.620">
    <property type="entry name" value="HUPs"/>
    <property type="match status" value="2"/>
</dbReference>
<dbReference type="Gene3D" id="1.10.730.10">
    <property type="entry name" value="Isoleucyl-tRNA Synthetase, Domain 1"/>
    <property type="match status" value="1"/>
</dbReference>
<dbReference type="Gene3D" id="1.10.287.380">
    <property type="entry name" value="Valyl-tRNA synthetase, C-terminal domain"/>
    <property type="match status" value="1"/>
</dbReference>
<dbReference type="Gene3D" id="3.90.740.10">
    <property type="entry name" value="Valyl/Leucyl/Isoleucyl-tRNA synthetase, editing domain"/>
    <property type="match status" value="1"/>
</dbReference>
<dbReference type="HAMAP" id="MF_02004">
    <property type="entry name" value="Val_tRNA_synth_type1"/>
    <property type="match status" value="1"/>
</dbReference>
<dbReference type="InterPro" id="IPR001412">
    <property type="entry name" value="aa-tRNA-synth_I_CS"/>
</dbReference>
<dbReference type="InterPro" id="IPR002300">
    <property type="entry name" value="aa-tRNA-synth_Ia"/>
</dbReference>
<dbReference type="InterPro" id="IPR033705">
    <property type="entry name" value="Anticodon_Ia_Val"/>
</dbReference>
<dbReference type="InterPro" id="IPR013155">
    <property type="entry name" value="M/V/L/I-tRNA-synth_anticd-bd"/>
</dbReference>
<dbReference type="InterPro" id="IPR014729">
    <property type="entry name" value="Rossmann-like_a/b/a_fold"/>
</dbReference>
<dbReference type="InterPro" id="IPR010978">
    <property type="entry name" value="tRNA-bd_arm"/>
</dbReference>
<dbReference type="InterPro" id="IPR009080">
    <property type="entry name" value="tRNAsynth_Ia_anticodon-bd"/>
</dbReference>
<dbReference type="InterPro" id="IPR037118">
    <property type="entry name" value="Val-tRNA_synth_C_sf"/>
</dbReference>
<dbReference type="InterPro" id="IPR009008">
    <property type="entry name" value="Val/Leu/Ile-tRNA-synth_edit"/>
</dbReference>
<dbReference type="InterPro" id="IPR002303">
    <property type="entry name" value="Valyl-tRNA_ligase"/>
</dbReference>
<dbReference type="NCBIfam" id="NF004349">
    <property type="entry name" value="PRK05729.1"/>
    <property type="match status" value="1"/>
</dbReference>
<dbReference type="NCBIfam" id="TIGR00422">
    <property type="entry name" value="valS"/>
    <property type="match status" value="1"/>
</dbReference>
<dbReference type="PANTHER" id="PTHR11946:SF93">
    <property type="entry name" value="VALINE--TRNA LIGASE, CHLOROPLASTIC_MITOCHONDRIAL 2"/>
    <property type="match status" value="1"/>
</dbReference>
<dbReference type="PANTHER" id="PTHR11946">
    <property type="entry name" value="VALYL-TRNA SYNTHETASES"/>
    <property type="match status" value="1"/>
</dbReference>
<dbReference type="Pfam" id="PF08264">
    <property type="entry name" value="Anticodon_1"/>
    <property type="match status" value="1"/>
</dbReference>
<dbReference type="Pfam" id="PF00133">
    <property type="entry name" value="tRNA-synt_1"/>
    <property type="match status" value="2"/>
</dbReference>
<dbReference type="PRINTS" id="PR00986">
    <property type="entry name" value="TRNASYNTHVAL"/>
</dbReference>
<dbReference type="SUPFAM" id="SSF47323">
    <property type="entry name" value="Anticodon-binding domain of a subclass of class I aminoacyl-tRNA synthetases"/>
    <property type="match status" value="1"/>
</dbReference>
<dbReference type="SUPFAM" id="SSF52374">
    <property type="entry name" value="Nucleotidylyl transferase"/>
    <property type="match status" value="1"/>
</dbReference>
<dbReference type="SUPFAM" id="SSF46589">
    <property type="entry name" value="tRNA-binding arm"/>
    <property type="match status" value="1"/>
</dbReference>
<dbReference type="SUPFAM" id="SSF50677">
    <property type="entry name" value="ValRS/IleRS/LeuRS editing domain"/>
    <property type="match status" value="1"/>
</dbReference>
<dbReference type="PROSITE" id="PS00178">
    <property type="entry name" value="AA_TRNA_LIGASE_I"/>
    <property type="match status" value="1"/>
</dbReference>
<evidence type="ECO:0000255" key="1">
    <source>
        <dbReference type="HAMAP-Rule" id="MF_02004"/>
    </source>
</evidence>
<organism>
    <name type="scientific">Mycoplasma pneumoniae (strain ATCC 29342 / M129 / Subtype 1)</name>
    <name type="common">Mycoplasmoides pneumoniae</name>
    <dbReference type="NCBI Taxonomy" id="272634"/>
    <lineage>
        <taxon>Bacteria</taxon>
        <taxon>Bacillati</taxon>
        <taxon>Mycoplasmatota</taxon>
        <taxon>Mycoplasmoidales</taxon>
        <taxon>Mycoplasmoidaceae</taxon>
        <taxon>Mycoplasmoides</taxon>
    </lineage>
</organism>
<name>SYV_MYCPN</name>
<accession>P75304</accession>
<gene>
    <name evidence="1" type="primary">valS</name>
    <name type="ordered locus">MPN_480</name>
    <name type="ORF">MP361</name>
</gene>
<sequence>MDKQFSFQGQYDFKTVSTGLYDSWSSASFFKPQKNKVPFTAILPPPNLTGTLHIGHAFEVSITDQIMRFKRLRGYGVNWIPGFDHAGIATQTKYEKLARETNPEYFQAPRKQKVKMIMDWALTQGDTIQSQIKSLGASLNWNQVNFTLSKKASQIVNDSFIQLFEQGFIYQAETLVNWDTKLNTAISNIEVINKPVDQQLYYIAYKLANNPKKRLVVATTRPETIFVDVCLFVHPKDKHYHSFVKQKVVNPLTGALMPVFTDSYVDKKFGTGVLKCTPAHDFNDFALNEKYRLPFVSCIDHNGLLNEHAKQFTGLTVSAARQQVVEFLQTQKLLVKTMPLTSNVGFSERSDTVVEPLLSKQWFVDLPKLKKALAIKKYPELIPKRFNKQVTRWLSQLKPWCISRQLIWGHPIPVWTHKQSGALHVGSTAPTDKQNYTQSTDVLDTWFSSSLWPLICLDWHKNKHFVPTDLLVTGYDILFFWVLRMTFNSYFQTKQLPFKQVLIHGLVRDAQNRKMSKSLNNGINPMDLIRDYGADATRLFLTSNHTPGDDLIFNEQKLKSAANFLNKLWNVTKYVLQLGEQAKTVPSTHLPSTLSERWIWAKLKQLIVQTTKLLDKYQLALANQALVNFIWNDFCNTFIETIKQEDTALLPQLYTTAKTVLSTAVVMLSTVTPFLAERIYQQFHSGSVMQASWPTAKAVKPPKLFADVVEAVSSLRHYKANNQLVANQNLAVVLSGKAAPVVQNYFHFNWVDLRIEVNKTPGFQIKIVDNAANNLAHLEKQRSFYLAEVQRSQAITTNPAFLKKAPPHKVKAELLKLEEYQKKLAEVNHLIAKLTKAE</sequence>
<reference key="1">
    <citation type="journal article" date="1996" name="Nucleic Acids Res.">
        <title>Complete sequence analysis of the genome of the bacterium Mycoplasma pneumoniae.</title>
        <authorList>
            <person name="Himmelreich R."/>
            <person name="Hilbert H."/>
            <person name="Plagens H."/>
            <person name="Pirkl E."/>
            <person name="Li B.-C."/>
            <person name="Herrmann R."/>
        </authorList>
    </citation>
    <scope>NUCLEOTIDE SEQUENCE [LARGE SCALE GENOMIC DNA]</scope>
    <source>
        <strain>ATCC 29342 / M129 / Subtype 1</strain>
    </source>
</reference>
<proteinExistence type="inferred from homology"/>
<keyword id="KW-0030">Aminoacyl-tRNA synthetase</keyword>
<keyword id="KW-0067">ATP-binding</keyword>
<keyword id="KW-0175">Coiled coil</keyword>
<keyword id="KW-0963">Cytoplasm</keyword>
<keyword id="KW-0436">Ligase</keyword>
<keyword id="KW-0547">Nucleotide-binding</keyword>
<keyword id="KW-0648">Protein biosynthesis</keyword>
<keyword id="KW-1185">Reference proteome</keyword>